<proteinExistence type="evidence at protein level"/>
<reference key="1">
    <citation type="journal article" date="1998" name="Curr. Biol.">
        <title>The COP9 complex is conserved between plants and mammals and is related to the 26S proteasome regulatory complex.</title>
        <authorList>
            <person name="Wei N."/>
            <person name="Tsuge T."/>
            <person name="Serino G."/>
            <person name="Dohmae N."/>
            <person name="Takio K."/>
            <person name="Matsui M."/>
            <person name="Deng X.-W."/>
        </authorList>
    </citation>
    <scope>NUCLEOTIDE SEQUENCE [MRNA] (ISOFORM 1)</scope>
    <scope>IDENTIFICATION IN THE CSN COMPLEX</scope>
    <source>
        <strain>C57BLKS/J</strain>
    </source>
</reference>
<reference key="2">
    <citation type="journal article" date="2005" name="Science">
        <title>The transcriptional landscape of the mammalian genome.</title>
        <authorList>
            <person name="Carninci P."/>
            <person name="Kasukawa T."/>
            <person name="Katayama S."/>
            <person name="Gough J."/>
            <person name="Frith M.C."/>
            <person name="Maeda N."/>
            <person name="Oyama R."/>
            <person name="Ravasi T."/>
            <person name="Lenhard B."/>
            <person name="Wells C."/>
            <person name="Kodzius R."/>
            <person name="Shimokawa K."/>
            <person name="Bajic V.B."/>
            <person name="Brenner S.E."/>
            <person name="Batalov S."/>
            <person name="Forrest A.R."/>
            <person name="Zavolan M."/>
            <person name="Davis M.J."/>
            <person name="Wilming L.G."/>
            <person name="Aidinis V."/>
            <person name="Allen J.E."/>
            <person name="Ambesi-Impiombato A."/>
            <person name="Apweiler R."/>
            <person name="Aturaliya R.N."/>
            <person name="Bailey T.L."/>
            <person name="Bansal M."/>
            <person name="Baxter L."/>
            <person name="Beisel K.W."/>
            <person name="Bersano T."/>
            <person name="Bono H."/>
            <person name="Chalk A.M."/>
            <person name="Chiu K.P."/>
            <person name="Choudhary V."/>
            <person name="Christoffels A."/>
            <person name="Clutterbuck D.R."/>
            <person name="Crowe M.L."/>
            <person name="Dalla E."/>
            <person name="Dalrymple B.P."/>
            <person name="de Bono B."/>
            <person name="Della Gatta G."/>
            <person name="di Bernardo D."/>
            <person name="Down T."/>
            <person name="Engstrom P."/>
            <person name="Fagiolini M."/>
            <person name="Faulkner G."/>
            <person name="Fletcher C.F."/>
            <person name="Fukushima T."/>
            <person name="Furuno M."/>
            <person name="Futaki S."/>
            <person name="Gariboldi M."/>
            <person name="Georgii-Hemming P."/>
            <person name="Gingeras T.R."/>
            <person name="Gojobori T."/>
            <person name="Green R.E."/>
            <person name="Gustincich S."/>
            <person name="Harbers M."/>
            <person name="Hayashi Y."/>
            <person name="Hensch T.K."/>
            <person name="Hirokawa N."/>
            <person name="Hill D."/>
            <person name="Huminiecki L."/>
            <person name="Iacono M."/>
            <person name="Ikeo K."/>
            <person name="Iwama A."/>
            <person name="Ishikawa T."/>
            <person name="Jakt M."/>
            <person name="Kanapin A."/>
            <person name="Katoh M."/>
            <person name="Kawasawa Y."/>
            <person name="Kelso J."/>
            <person name="Kitamura H."/>
            <person name="Kitano H."/>
            <person name="Kollias G."/>
            <person name="Krishnan S.P."/>
            <person name="Kruger A."/>
            <person name="Kummerfeld S.K."/>
            <person name="Kurochkin I.V."/>
            <person name="Lareau L.F."/>
            <person name="Lazarevic D."/>
            <person name="Lipovich L."/>
            <person name="Liu J."/>
            <person name="Liuni S."/>
            <person name="McWilliam S."/>
            <person name="Madan Babu M."/>
            <person name="Madera M."/>
            <person name="Marchionni L."/>
            <person name="Matsuda H."/>
            <person name="Matsuzawa S."/>
            <person name="Miki H."/>
            <person name="Mignone F."/>
            <person name="Miyake S."/>
            <person name="Morris K."/>
            <person name="Mottagui-Tabar S."/>
            <person name="Mulder N."/>
            <person name="Nakano N."/>
            <person name="Nakauchi H."/>
            <person name="Ng P."/>
            <person name="Nilsson R."/>
            <person name="Nishiguchi S."/>
            <person name="Nishikawa S."/>
            <person name="Nori F."/>
            <person name="Ohara O."/>
            <person name="Okazaki Y."/>
            <person name="Orlando V."/>
            <person name="Pang K.C."/>
            <person name="Pavan W.J."/>
            <person name="Pavesi G."/>
            <person name="Pesole G."/>
            <person name="Petrovsky N."/>
            <person name="Piazza S."/>
            <person name="Reed J."/>
            <person name="Reid J.F."/>
            <person name="Ring B.Z."/>
            <person name="Ringwald M."/>
            <person name="Rost B."/>
            <person name="Ruan Y."/>
            <person name="Salzberg S.L."/>
            <person name="Sandelin A."/>
            <person name="Schneider C."/>
            <person name="Schoenbach C."/>
            <person name="Sekiguchi K."/>
            <person name="Semple C.A."/>
            <person name="Seno S."/>
            <person name="Sessa L."/>
            <person name="Sheng Y."/>
            <person name="Shibata Y."/>
            <person name="Shimada H."/>
            <person name="Shimada K."/>
            <person name="Silva D."/>
            <person name="Sinclair B."/>
            <person name="Sperling S."/>
            <person name="Stupka E."/>
            <person name="Sugiura K."/>
            <person name="Sultana R."/>
            <person name="Takenaka Y."/>
            <person name="Taki K."/>
            <person name="Tammoja K."/>
            <person name="Tan S.L."/>
            <person name="Tang S."/>
            <person name="Taylor M.S."/>
            <person name="Tegner J."/>
            <person name="Teichmann S.A."/>
            <person name="Ueda H.R."/>
            <person name="van Nimwegen E."/>
            <person name="Verardo R."/>
            <person name="Wei C.L."/>
            <person name="Yagi K."/>
            <person name="Yamanishi H."/>
            <person name="Zabarovsky E."/>
            <person name="Zhu S."/>
            <person name="Zimmer A."/>
            <person name="Hide W."/>
            <person name="Bult C."/>
            <person name="Grimmond S.M."/>
            <person name="Teasdale R.D."/>
            <person name="Liu E.T."/>
            <person name="Brusic V."/>
            <person name="Quackenbush J."/>
            <person name="Wahlestedt C."/>
            <person name="Mattick J.S."/>
            <person name="Hume D.A."/>
            <person name="Kai C."/>
            <person name="Sasaki D."/>
            <person name="Tomaru Y."/>
            <person name="Fukuda S."/>
            <person name="Kanamori-Katayama M."/>
            <person name="Suzuki M."/>
            <person name="Aoki J."/>
            <person name="Arakawa T."/>
            <person name="Iida J."/>
            <person name="Imamura K."/>
            <person name="Itoh M."/>
            <person name="Kato T."/>
            <person name="Kawaji H."/>
            <person name="Kawagashira N."/>
            <person name="Kawashima T."/>
            <person name="Kojima M."/>
            <person name="Kondo S."/>
            <person name="Konno H."/>
            <person name="Nakano K."/>
            <person name="Ninomiya N."/>
            <person name="Nishio T."/>
            <person name="Okada M."/>
            <person name="Plessy C."/>
            <person name="Shibata K."/>
            <person name="Shiraki T."/>
            <person name="Suzuki S."/>
            <person name="Tagami M."/>
            <person name="Waki K."/>
            <person name="Watahiki A."/>
            <person name="Okamura-Oho Y."/>
            <person name="Suzuki H."/>
            <person name="Kawai J."/>
            <person name="Hayashizaki Y."/>
        </authorList>
    </citation>
    <scope>NUCLEOTIDE SEQUENCE [LARGE SCALE MRNA] (ISOFORM 2)</scope>
    <source>
        <strain>C57BL/6J</strain>
        <tissue>Embryo</tissue>
    </source>
</reference>
<reference key="3">
    <citation type="journal article" date="2004" name="Genome Res.">
        <title>The status, quality, and expansion of the NIH full-length cDNA project: the Mammalian Gene Collection (MGC).</title>
        <authorList>
            <consortium name="The MGC Project Team"/>
        </authorList>
    </citation>
    <scope>NUCLEOTIDE SEQUENCE [LARGE SCALE MRNA] (ISOFORM 1)</scope>
    <source>
        <strain>FVB/N</strain>
        <tissue>Mammary tumor</tissue>
    </source>
</reference>
<reference key="4">
    <citation type="journal article" date="2000" name="World J. Gastroenterol.">
        <title>Mechanism of exogenous nucleic acids and their precursors improving the repair of intestinal epithelium after gamma-irradiation in mice.</title>
        <authorList>
            <person name="Cui D.X."/>
            <person name="Zeng G.Y."/>
            <person name="Wang F."/>
            <person name="Xu J.R."/>
            <person name="Ren D.Q."/>
            <person name="Guo Y.H."/>
            <person name="Tian F.R."/>
            <person name="Yan X.J."/>
            <person name="Hou Y."/>
            <person name="Su C.Z."/>
        </authorList>
    </citation>
    <scope>NUCLEOTIDE SEQUENCE [MRNA] OF 9-67</scope>
</reference>
<reference key="5">
    <citation type="journal article" date="2004" name="J. Mol. Biol.">
        <title>Ubiquitin-dependent degradation of Id1 and Id3 is mediated by the COP9 signalosome.</title>
        <authorList>
            <person name="Berse M."/>
            <person name="Bounpheng M."/>
            <person name="Huang X."/>
            <person name="Christy B."/>
            <person name="Pollmann C."/>
            <person name="Dubiel W."/>
        </authorList>
    </citation>
    <scope>INTERACTION WITH ID3</scope>
</reference>
<reference key="6">
    <citation type="journal article" date="2010" name="Cell">
        <title>A tissue-specific atlas of mouse protein phosphorylation and expression.</title>
        <authorList>
            <person name="Huttlin E.L."/>
            <person name="Jedrychowski M.P."/>
            <person name="Elias J.E."/>
            <person name="Goswami T."/>
            <person name="Rad R."/>
            <person name="Beausoleil S.A."/>
            <person name="Villen J."/>
            <person name="Haas W."/>
            <person name="Sowa M.E."/>
            <person name="Gygi S.P."/>
        </authorList>
    </citation>
    <scope>IDENTIFICATION BY MASS SPECTROMETRY [LARGE SCALE ANALYSIS]</scope>
    <source>
        <tissue>Brain</tissue>
        <tissue>Brown adipose tissue</tissue>
        <tissue>Heart</tissue>
        <tissue>Kidney</tissue>
        <tissue>Liver</tissue>
        <tissue>Lung</tissue>
        <tissue>Pancreas</tissue>
        <tissue>Spleen</tissue>
        <tissue>Testis</tissue>
    </source>
</reference>
<sequence length="275" mass="30224">MSAEVKVTGQNQEQFLLLAKSAKGAALATLIHQVLEAPGVYVFGELLDMPNVRELAESDFASTFRLLTVFAYGTYADYLAEARNLPPLTDAQKNKLRHLSVVTLAAKVKCIPYAVLLEALALRNVRQLEDLVIEAVYADVLRGSLDQRNQRLEVDYSIGRDIQRQDLSAIAQTLQEWCVGCEVVLSGIEEQVSRANQHKEQQLGLKQQIESEVANLKKTIKVTTAAAAAATSQDPEQHLTELREPASGTNQRQPSKKASKGKGLRGSAKIWSKSN</sequence>
<organism>
    <name type="scientific">Mus musculus</name>
    <name type="common">Mouse</name>
    <dbReference type="NCBI Taxonomy" id="10090"/>
    <lineage>
        <taxon>Eukaryota</taxon>
        <taxon>Metazoa</taxon>
        <taxon>Chordata</taxon>
        <taxon>Craniata</taxon>
        <taxon>Vertebrata</taxon>
        <taxon>Euteleostomi</taxon>
        <taxon>Mammalia</taxon>
        <taxon>Eutheria</taxon>
        <taxon>Euarchontoglires</taxon>
        <taxon>Glires</taxon>
        <taxon>Rodentia</taxon>
        <taxon>Myomorpha</taxon>
        <taxon>Muroidea</taxon>
        <taxon>Muridae</taxon>
        <taxon>Murinae</taxon>
        <taxon>Mus</taxon>
        <taxon>Mus</taxon>
    </lineage>
</organism>
<evidence type="ECO:0000250" key="1"/>
<evidence type="ECO:0000250" key="2">
    <source>
        <dbReference type="UniProtKB" id="Q9UBW8"/>
    </source>
</evidence>
<evidence type="ECO:0000255" key="3"/>
<evidence type="ECO:0000255" key="4">
    <source>
        <dbReference type="PROSITE-ProRule" id="PRU01185"/>
    </source>
</evidence>
<evidence type="ECO:0000256" key="5">
    <source>
        <dbReference type="SAM" id="MobiDB-lite"/>
    </source>
</evidence>
<evidence type="ECO:0000269" key="6">
    <source>
    </source>
</evidence>
<evidence type="ECO:0000269" key="7">
    <source>
    </source>
</evidence>
<evidence type="ECO:0000303" key="8">
    <source>
    </source>
</evidence>
<evidence type="ECO:0000305" key="9"/>
<dbReference type="EMBL" id="AF071316">
    <property type="protein sequence ID" value="AAC33903.1"/>
    <property type="molecule type" value="mRNA"/>
</dbReference>
<dbReference type="EMBL" id="AK010726">
    <property type="protein sequence ID" value="BAB27144.1"/>
    <property type="status" value="ALT_FRAME"/>
    <property type="molecule type" value="mRNA"/>
</dbReference>
<dbReference type="EMBL" id="AK013155">
    <property type="protein sequence ID" value="BAB28682.1"/>
    <property type="molecule type" value="mRNA"/>
</dbReference>
<dbReference type="EMBL" id="AK019122">
    <property type="protein sequence ID" value="BAB31554.1"/>
    <property type="molecule type" value="mRNA"/>
</dbReference>
<dbReference type="EMBL" id="BC003724">
    <property type="protein sequence ID" value="AAH03724.1"/>
    <property type="molecule type" value="mRNA"/>
</dbReference>
<dbReference type="EMBL" id="AF240179">
    <property type="protein sequence ID" value="AAK43736.1"/>
    <property type="status" value="ALT_FRAME"/>
    <property type="molecule type" value="mRNA"/>
</dbReference>
<dbReference type="CCDS" id="CCDS20539.1">
    <molecule id="Q9CZ04-1"/>
</dbReference>
<dbReference type="CCDS" id="CCDS51909.1">
    <molecule id="Q9CZ04-2"/>
</dbReference>
<dbReference type="RefSeq" id="NP_001157561.1">
    <molecule id="Q9CZ04-2"/>
    <property type="nucleotide sequence ID" value="NM_001164089.3"/>
</dbReference>
<dbReference type="RefSeq" id="NP_001342470.1">
    <molecule id="Q9CZ04-1"/>
    <property type="nucleotide sequence ID" value="NM_001355541.2"/>
</dbReference>
<dbReference type="RefSeq" id="NP_001342471.1">
    <molecule id="Q9CZ04-1"/>
    <property type="nucleotide sequence ID" value="NM_001355542.2"/>
</dbReference>
<dbReference type="RefSeq" id="NP_001366048.1">
    <molecule id="Q9CZ04-1"/>
    <property type="nucleotide sequence ID" value="NM_001379119.1"/>
</dbReference>
<dbReference type="RefSeq" id="NP_001366049.1">
    <molecule id="Q9CZ04-1"/>
    <property type="nucleotide sequence ID" value="NM_001379120.1"/>
</dbReference>
<dbReference type="RefSeq" id="NP_001366051.1">
    <molecule id="Q9CZ04-2"/>
    <property type="nucleotide sequence ID" value="NM_001379122.1"/>
</dbReference>
<dbReference type="RefSeq" id="NP_001366052.1">
    <molecule id="Q9CZ04-2"/>
    <property type="nucleotide sequence ID" value="NM_001379123.1"/>
</dbReference>
<dbReference type="RefSeq" id="NP_001366053.1">
    <molecule id="Q9CZ04-2"/>
    <property type="nucleotide sequence ID" value="NM_001379124.1"/>
</dbReference>
<dbReference type="RefSeq" id="NP_001366054.1">
    <molecule id="Q9CZ04-2"/>
    <property type="nucleotide sequence ID" value="NM_001379125.1"/>
</dbReference>
<dbReference type="RefSeq" id="NP_001397523.1">
    <molecule id="Q9CZ04-1"/>
    <property type="nucleotide sequence ID" value="NM_001410594.1"/>
</dbReference>
<dbReference type="RefSeq" id="NP_001397524.1">
    <molecule id="Q9CZ04-2"/>
    <property type="nucleotide sequence ID" value="NM_001410595.1"/>
</dbReference>
<dbReference type="RefSeq" id="NP_036133.1">
    <molecule id="Q9CZ04-1"/>
    <property type="nucleotide sequence ID" value="NM_012003.4"/>
</dbReference>
<dbReference type="RefSeq" id="XP_006506222.1">
    <property type="nucleotide sequence ID" value="XM_006506159.3"/>
</dbReference>
<dbReference type="RefSeq" id="XP_006506223.1">
    <property type="nucleotide sequence ID" value="XM_006506160.2"/>
</dbReference>
<dbReference type="RefSeq" id="XP_006506224.1">
    <property type="nucleotide sequence ID" value="XM_006506161.2"/>
</dbReference>
<dbReference type="RefSeq" id="XP_006506225.1">
    <property type="nucleotide sequence ID" value="XM_006506162.3"/>
</dbReference>
<dbReference type="RefSeq" id="XP_011239667.1">
    <property type="nucleotide sequence ID" value="XM_011241365.2"/>
</dbReference>
<dbReference type="RefSeq" id="XP_017177082.1">
    <property type="nucleotide sequence ID" value="XM_017321593.1"/>
</dbReference>
<dbReference type="RefSeq" id="XP_030111266.1">
    <molecule id="Q9CZ04-1"/>
    <property type="nucleotide sequence ID" value="XM_030255406.2"/>
</dbReference>
<dbReference type="SMR" id="Q9CZ04"/>
<dbReference type="BioGRID" id="205045">
    <property type="interactions" value="35"/>
</dbReference>
<dbReference type="CORUM" id="Q9CZ04"/>
<dbReference type="FunCoup" id="Q9CZ04">
    <property type="interactions" value="4369"/>
</dbReference>
<dbReference type="STRING" id="10090.ENSMUSP00000108058"/>
<dbReference type="GlyGen" id="Q9CZ04">
    <property type="glycosylation" value="1 site, 1 O-linked glycan (1 site)"/>
</dbReference>
<dbReference type="iPTMnet" id="Q9CZ04"/>
<dbReference type="PhosphoSitePlus" id="Q9CZ04"/>
<dbReference type="SwissPalm" id="Q9CZ04"/>
<dbReference type="jPOST" id="Q9CZ04"/>
<dbReference type="PaxDb" id="10090-ENSMUSP00000108058"/>
<dbReference type="PeptideAtlas" id="Q9CZ04"/>
<dbReference type="ProteomicsDB" id="285349">
    <molecule id="Q9CZ04-1"/>
</dbReference>
<dbReference type="ProteomicsDB" id="285350">
    <molecule id="Q9CZ04-2"/>
</dbReference>
<dbReference type="Pumba" id="Q9CZ04"/>
<dbReference type="Antibodypedia" id="11091">
    <property type="antibodies" value="219 antibodies from 31 providers"/>
</dbReference>
<dbReference type="DNASU" id="26894"/>
<dbReference type="Ensembl" id="ENSMUST00000032220.15">
    <molecule id="Q9CZ04-1"/>
    <property type="protein sequence ID" value="ENSMUSP00000032220.9"/>
    <property type="gene ID" value="ENSMUSG00000030127.16"/>
</dbReference>
<dbReference type="Ensembl" id="ENSMUST00000112439.9">
    <molecule id="Q9CZ04-2"/>
    <property type="protein sequence ID" value="ENSMUSP00000108058.3"/>
    <property type="gene ID" value="ENSMUSG00000030127.16"/>
</dbReference>
<dbReference type="GeneID" id="26894"/>
<dbReference type="KEGG" id="mmu:26894"/>
<dbReference type="UCSC" id="uc009dsr.2">
    <molecule id="Q9CZ04-2"/>
    <property type="organism name" value="mouse"/>
</dbReference>
<dbReference type="UCSC" id="uc009dss.2">
    <molecule id="Q9CZ04-1"/>
    <property type="organism name" value="mouse"/>
</dbReference>
<dbReference type="AGR" id="MGI:1349400"/>
<dbReference type="CTD" id="50813"/>
<dbReference type="MGI" id="MGI:1349400">
    <property type="gene designation" value="Cops7a"/>
</dbReference>
<dbReference type="VEuPathDB" id="HostDB:ENSMUSG00000030127"/>
<dbReference type="eggNOG" id="KOG3250">
    <property type="taxonomic scope" value="Eukaryota"/>
</dbReference>
<dbReference type="GeneTree" id="ENSGT00940000159873"/>
<dbReference type="InParanoid" id="Q9CZ04"/>
<dbReference type="OMA" id="SACEYRH"/>
<dbReference type="PhylomeDB" id="Q9CZ04"/>
<dbReference type="TreeFam" id="TF101149"/>
<dbReference type="Reactome" id="R-MMU-5696394">
    <property type="pathway name" value="DNA Damage Recognition in GG-NER"/>
</dbReference>
<dbReference type="Reactome" id="R-MMU-6781823">
    <property type="pathway name" value="Formation of TC-NER Pre-Incision Complex"/>
</dbReference>
<dbReference type="Reactome" id="R-MMU-8856825">
    <property type="pathway name" value="Cargo recognition for clathrin-mediated endocytosis"/>
</dbReference>
<dbReference type="Reactome" id="R-MMU-8951664">
    <property type="pathway name" value="Neddylation"/>
</dbReference>
<dbReference type="BioGRID-ORCS" id="26894">
    <property type="hits" value="8 hits in 79 CRISPR screens"/>
</dbReference>
<dbReference type="ChiTaRS" id="Cops7a">
    <property type="organism name" value="mouse"/>
</dbReference>
<dbReference type="PRO" id="PR:Q9CZ04"/>
<dbReference type="Proteomes" id="UP000000589">
    <property type="component" value="Chromosome 6"/>
</dbReference>
<dbReference type="RNAct" id="Q9CZ04">
    <property type="molecule type" value="protein"/>
</dbReference>
<dbReference type="Bgee" id="ENSMUSG00000030127">
    <property type="expression patterns" value="Expressed in spermatocyte and 276 other cell types or tissues"/>
</dbReference>
<dbReference type="ExpressionAtlas" id="Q9CZ04">
    <property type="expression patterns" value="baseline and differential"/>
</dbReference>
<dbReference type="GO" id="GO:0008180">
    <property type="term" value="C:COP9 signalosome"/>
    <property type="evidence" value="ECO:0007669"/>
    <property type="project" value="UniProtKB-KW"/>
</dbReference>
<dbReference type="GO" id="GO:0005829">
    <property type="term" value="C:cytosol"/>
    <property type="evidence" value="ECO:0007669"/>
    <property type="project" value="Ensembl"/>
</dbReference>
<dbReference type="GO" id="GO:0005654">
    <property type="term" value="C:nucleoplasm"/>
    <property type="evidence" value="ECO:0007669"/>
    <property type="project" value="Ensembl"/>
</dbReference>
<dbReference type="GO" id="GO:0010387">
    <property type="term" value="P:COP9 signalosome assembly"/>
    <property type="evidence" value="ECO:0007669"/>
    <property type="project" value="InterPro"/>
</dbReference>
<dbReference type="GO" id="GO:0000338">
    <property type="term" value="P:protein deneddylation"/>
    <property type="evidence" value="ECO:0007669"/>
    <property type="project" value="Ensembl"/>
</dbReference>
<dbReference type="InterPro" id="IPR045237">
    <property type="entry name" value="COPS7/eIF3m"/>
</dbReference>
<dbReference type="InterPro" id="IPR041481">
    <property type="entry name" value="CSN7_helixI"/>
</dbReference>
<dbReference type="InterPro" id="IPR000717">
    <property type="entry name" value="PCI_dom"/>
</dbReference>
<dbReference type="PANTHER" id="PTHR15350">
    <property type="entry name" value="COP9 SIGNALOSOME COMPLEX SUBUNIT 7/DENDRITIC CELL PROTEIN GA17"/>
    <property type="match status" value="1"/>
</dbReference>
<dbReference type="PANTHER" id="PTHR15350:SF7">
    <property type="entry name" value="COP9 SIGNALOSOME COMPLEX SUBUNIT 7A"/>
    <property type="match status" value="1"/>
</dbReference>
<dbReference type="Pfam" id="PF22061">
    <property type="entry name" value="CSN7_HB_subdom"/>
    <property type="match status" value="1"/>
</dbReference>
<dbReference type="Pfam" id="PF18392">
    <property type="entry name" value="CSN7a_helixI"/>
    <property type="match status" value="1"/>
</dbReference>
<dbReference type="Pfam" id="PF01399">
    <property type="entry name" value="PCI"/>
    <property type="match status" value="1"/>
</dbReference>
<dbReference type="SMART" id="SM00088">
    <property type="entry name" value="PINT"/>
    <property type="match status" value="1"/>
</dbReference>
<dbReference type="PROSITE" id="PS50250">
    <property type="entry name" value="PCI"/>
    <property type="match status" value="1"/>
</dbReference>
<name>CSN7A_MOUSE</name>
<protein>
    <recommendedName>
        <fullName>COP9 signalosome complex subunit 7a</fullName>
        <shortName>SGN7a</shortName>
        <shortName>Signalosome subunit 7a</shortName>
    </recommendedName>
    <alternativeName>
        <fullName>JAB1-containing signalosome subunit 7a</fullName>
    </alternativeName>
</protein>
<keyword id="KW-0007">Acetylation</keyword>
<keyword id="KW-0025">Alternative splicing</keyword>
<keyword id="KW-0175">Coiled coil</keyword>
<keyword id="KW-0963">Cytoplasm</keyword>
<keyword id="KW-0539">Nucleus</keyword>
<keyword id="KW-0597">Phosphoprotein</keyword>
<keyword id="KW-1185">Reference proteome</keyword>
<keyword id="KW-0736">Signalosome</keyword>
<accession>Q9CZ04</accession>
<accession>O88546</accession>
<accession>Q925R8</accession>
<accession>Q9CPQ4</accession>
<accession>Q9CWD2</accession>
<gene>
    <name type="primary">Cops7a</name>
    <name type="synonym">Csn7a</name>
</gene>
<comment type="function">
    <text evidence="1">Component of the COP9 signalosome complex (CSN), a complex involved in various cellular and developmental processes. The CSN complex is an essential regulator of the ubiquitin (Ubl) conjugation pathway by mediating the deneddylation of the cullin subunits of SCF-type E3 ligase complexes, leading to decrease the Ubl ligase activity of SCF-type complexes such as SCF, CSA or DDB2. The complex is also involved in phosphorylation of p53/TP53, JUN, I-kappa-B-alpha/NFKBIA, ITPK1 and IRF8/ICSBP, possibly via its association with CK2 and PKD kinases. CSN-dependent phosphorylation of TP53 and JUN promotes and protects degradation by the Ubl system, respectively (By similarity).</text>
</comment>
<comment type="subunit">
    <text evidence="2 6 7">Component of the CSN complex, composed of COPS1/GPS1, COPS2, COPS3, COPS4, COPS5, COPS6, COPS7 (COPS7A or COPS7B), COPS8 and COPS9 (PubMed:9707402). In the complex, it probably interacts directly with COPS1, COPS2, COPS4, COPS5, COPS6 and COPS8. Interacts with PMF1. Interacts with the translation initiation factor EIF3S6. Interacts with CK2 and PKD (By similarity). Interacts directly with ID3 (PubMed:15451666).</text>
</comment>
<comment type="subcellular location">
    <subcellularLocation>
        <location evidence="1">Cytoplasm</location>
    </subcellularLocation>
    <subcellularLocation>
        <location evidence="1">Nucleus</location>
    </subcellularLocation>
</comment>
<comment type="alternative products">
    <event type="alternative splicing"/>
    <isoform>
        <id>Q9CZ04-1</id>
        <name>1</name>
        <sequence type="displayed"/>
    </isoform>
    <isoform>
        <id>Q9CZ04-2</id>
        <name>2</name>
        <sequence type="described" ref="VSP_011912"/>
    </isoform>
</comment>
<comment type="PTM">
    <text>Phosphorylated by CK2 and PKD kinases.</text>
</comment>
<comment type="similarity">
    <text evidence="9">Belongs to the CSN7/EIF3M family. CSN7 subfamily.</text>
</comment>
<comment type="sequence caution" evidence="9">
    <conflict type="frameshift">
        <sequence resource="EMBL-CDS" id="AAK43736"/>
    </conflict>
</comment>
<comment type="sequence caution" evidence="9">
    <conflict type="frameshift">
        <sequence resource="EMBL-CDS" id="BAB27144"/>
    </conflict>
</comment>
<feature type="initiator methionine" description="Removed" evidence="2">
    <location>
        <position position="1"/>
    </location>
</feature>
<feature type="chain" id="PRO_0000120997" description="COP9 signalosome complex subunit 7a">
    <location>
        <begin position="2"/>
        <end position="275"/>
    </location>
</feature>
<feature type="domain" description="PCI" evidence="4">
    <location>
        <begin position="2"/>
        <end position="159"/>
    </location>
</feature>
<feature type="region of interest" description="Disordered" evidence="5">
    <location>
        <begin position="228"/>
        <end position="275"/>
    </location>
</feature>
<feature type="coiled-coil region" evidence="3">
    <location>
        <begin position="185"/>
        <end position="233"/>
    </location>
</feature>
<feature type="compositionally biased region" description="Basic and acidic residues" evidence="5">
    <location>
        <begin position="235"/>
        <end position="244"/>
    </location>
</feature>
<feature type="compositionally biased region" description="Basic residues" evidence="5">
    <location>
        <begin position="254"/>
        <end position="263"/>
    </location>
</feature>
<feature type="modified residue" description="N-acetylserine" evidence="2">
    <location>
        <position position="2"/>
    </location>
</feature>
<feature type="splice variant" id="VSP_011912" description="In isoform 2." evidence="8">
    <original>LRGSAKIWSKSN</original>
    <variation>EKINPQSTVKPSAK</variation>
    <location>
        <begin position="264"/>
        <end position="275"/>
    </location>
</feature>
<feature type="sequence conflict" description="In Ref. 2; BAB28682." evidence="9" ref="2">
    <original>E</original>
    <variation>K</variation>
    <location>
        <position position="153"/>
    </location>
</feature>